<organism>
    <name type="scientific">Methylibium petroleiphilum (strain ATCC BAA-1232 / LMG 22953 / PM1)</name>
    <dbReference type="NCBI Taxonomy" id="420662"/>
    <lineage>
        <taxon>Bacteria</taxon>
        <taxon>Pseudomonadati</taxon>
        <taxon>Pseudomonadota</taxon>
        <taxon>Betaproteobacteria</taxon>
        <taxon>Burkholderiales</taxon>
        <taxon>Sphaerotilaceae</taxon>
        <taxon>Methylibium</taxon>
    </lineage>
</organism>
<gene>
    <name evidence="1" type="primary">rpoC</name>
    <name type="ordered locus">Mpe_A3450</name>
</gene>
<accession>A2SLG4</accession>
<proteinExistence type="inferred from homology"/>
<keyword id="KW-0240">DNA-directed RNA polymerase</keyword>
<keyword id="KW-0460">Magnesium</keyword>
<keyword id="KW-0479">Metal-binding</keyword>
<keyword id="KW-0548">Nucleotidyltransferase</keyword>
<keyword id="KW-1185">Reference proteome</keyword>
<keyword id="KW-0804">Transcription</keyword>
<keyword id="KW-0808">Transferase</keyword>
<keyword id="KW-0862">Zinc</keyword>
<name>RPOC_METPP</name>
<reference key="1">
    <citation type="journal article" date="2007" name="J. Bacteriol.">
        <title>Whole-genome analysis of the methyl tert-butyl ether-degrading beta-proteobacterium Methylibium petroleiphilum PM1.</title>
        <authorList>
            <person name="Kane S.R."/>
            <person name="Chakicherla A.Y."/>
            <person name="Chain P.S.G."/>
            <person name="Schmidt R."/>
            <person name="Shin M.W."/>
            <person name="Legler T.C."/>
            <person name="Scow K.M."/>
            <person name="Larimer F.W."/>
            <person name="Lucas S.M."/>
            <person name="Richardson P.M."/>
            <person name="Hristova K.R."/>
        </authorList>
    </citation>
    <scope>NUCLEOTIDE SEQUENCE [LARGE SCALE GENOMIC DNA]</scope>
    <source>
        <strain>ATCC BAA-1232 / LMG 22953 / PM1</strain>
    </source>
</reference>
<dbReference type="EC" id="2.7.7.6" evidence="1"/>
<dbReference type="EMBL" id="CP000555">
    <property type="protein sequence ID" value="ABM96403.1"/>
    <property type="molecule type" value="Genomic_DNA"/>
</dbReference>
<dbReference type="RefSeq" id="WP_011831024.1">
    <property type="nucleotide sequence ID" value="NC_008825.1"/>
</dbReference>
<dbReference type="SMR" id="A2SLG4"/>
<dbReference type="STRING" id="420662.Mpe_A3450"/>
<dbReference type="KEGG" id="mpt:Mpe_A3450"/>
<dbReference type="eggNOG" id="COG0086">
    <property type="taxonomic scope" value="Bacteria"/>
</dbReference>
<dbReference type="HOGENOM" id="CLU_000524_3_1_4"/>
<dbReference type="Proteomes" id="UP000000366">
    <property type="component" value="Chromosome"/>
</dbReference>
<dbReference type="GO" id="GO:0000428">
    <property type="term" value="C:DNA-directed RNA polymerase complex"/>
    <property type="evidence" value="ECO:0007669"/>
    <property type="project" value="UniProtKB-KW"/>
</dbReference>
<dbReference type="GO" id="GO:0003677">
    <property type="term" value="F:DNA binding"/>
    <property type="evidence" value="ECO:0007669"/>
    <property type="project" value="UniProtKB-UniRule"/>
</dbReference>
<dbReference type="GO" id="GO:0003899">
    <property type="term" value="F:DNA-directed RNA polymerase activity"/>
    <property type="evidence" value="ECO:0007669"/>
    <property type="project" value="UniProtKB-UniRule"/>
</dbReference>
<dbReference type="GO" id="GO:0000287">
    <property type="term" value="F:magnesium ion binding"/>
    <property type="evidence" value="ECO:0007669"/>
    <property type="project" value="UniProtKB-UniRule"/>
</dbReference>
<dbReference type="GO" id="GO:0008270">
    <property type="term" value="F:zinc ion binding"/>
    <property type="evidence" value="ECO:0007669"/>
    <property type="project" value="UniProtKB-UniRule"/>
</dbReference>
<dbReference type="GO" id="GO:0006351">
    <property type="term" value="P:DNA-templated transcription"/>
    <property type="evidence" value="ECO:0007669"/>
    <property type="project" value="UniProtKB-UniRule"/>
</dbReference>
<dbReference type="CDD" id="cd02655">
    <property type="entry name" value="RNAP_beta'_C"/>
    <property type="match status" value="1"/>
</dbReference>
<dbReference type="CDD" id="cd01609">
    <property type="entry name" value="RNAP_beta'_N"/>
    <property type="match status" value="1"/>
</dbReference>
<dbReference type="FunFam" id="1.10.132.30:FF:000003">
    <property type="entry name" value="DNA-directed RNA polymerase subunit beta"/>
    <property type="match status" value="1"/>
</dbReference>
<dbReference type="FunFam" id="1.10.150.390:FF:000002">
    <property type="entry name" value="DNA-directed RNA polymerase subunit beta"/>
    <property type="match status" value="1"/>
</dbReference>
<dbReference type="FunFam" id="4.10.860.120:FF:000001">
    <property type="entry name" value="DNA-directed RNA polymerase subunit beta"/>
    <property type="match status" value="1"/>
</dbReference>
<dbReference type="Gene3D" id="1.10.132.30">
    <property type="match status" value="1"/>
</dbReference>
<dbReference type="Gene3D" id="1.10.150.390">
    <property type="match status" value="1"/>
</dbReference>
<dbReference type="Gene3D" id="1.10.1790.20">
    <property type="match status" value="1"/>
</dbReference>
<dbReference type="Gene3D" id="1.10.40.90">
    <property type="match status" value="1"/>
</dbReference>
<dbReference type="Gene3D" id="2.40.40.20">
    <property type="match status" value="1"/>
</dbReference>
<dbReference type="Gene3D" id="2.40.50.100">
    <property type="match status" value="3"/>
</dbReference>
<dbReference type="Gene3D" id="4.10.860.120">
    <property type="entry name" value="RNA polymerase II, clamp domain"/>
    <property type="match status" value="1"/>
</dbReference>
<dbReference type="Gene3D" id="1.10.274.100">
    <property type="entry name" value="RNA polymerase Rpb1, domain 3"/>
    <property type="match status" value="1"/>
</dbReference>
<dbReference type="HAMAP" id="MF_01322">
    <property type="entry name" value="RNApol_bact_RpoC"/>
    <property type="match status" value="1"/>
</dbReference>
<dbReference type="InterPro" id="IPR045867">
    <property type="entry name" value="DNA-dir_RpoC_beta_prime"/>
</dbReference>
<dbReference type="InterPro" id="IPR012754">
    <property type="entry name" value="DNA-dir_RpoC_beta_prime_bact"/>
</dbReference>
<dbReference type="InterPro" id="IPR000722">
    <property type="entry name" value="RNA_pol_asu"/>
</dbReference>
<dbReference type="InterPro" id="IPR006592">
    <property type="entry name" value="RNA_pol_N"/>
</dbReference>
<dbReference type="InterPro" id="IPR007080">
    <property type="entry name" value="RNA_pol_Rpb1_1"/>
</dbReference>
<dbReference type="InterPro" id="IPR007066">
    <property type="entry name" value="RNA_pol_Rpb1_3"/>
</dbReference>
<dbReference type="InterPro" id="IPR042102">
    <property type="entry name" value="RNA_pol_Rpb1_3_sf"/>
</dbReference>
<dbReference type="InterPro" id="IPR007083">
    <property type="entry name" value="RNA_pol_Rpb1_4"/>
</dbReference>
<dbReference type="InterPro" id="IPR007081">
    <property type="entry name" value="RNA_pol_Rpb1_5"/>
</dbReference>
<dbReference type="InterPro" id="IPR044893">
    <property type="entry name" value="RNA_pol_Rpb1_clamp_domain"/>
</dbReference>
<dbReference type="InterPro" id="IPR038120">
    <property type="entry name" value="Rpb1_funnel_sf"/>
</dbReference>
<dbReference type="NCBIfam" id="TIGR02386">
    <property type="entry name" value="rpoC_TIGR"/>
    <property type="match status" value="1"/>
</dbReference>
<dbReference type="PANTHER" id="PTHR19376">
    <property type="entry name" value="DNA-DIRECTED RNA POLYMERASE"/>
    <property type="match status" value="1"/>
</dbReference>
<dbReference type="PANTHER" id="PTHR19376:SF54">
    <property type="entry name" value="DNA-DIRECTED RNA POLYMERASE SUBUNIT BETA"/>
    <property type="match status" value="1"/>
</dbReference>
<dbReference type="Pfam" id="PF04997">
    <property type="entry name" value="RNA_pol_Rpb1_1"/>
    <property type="match status" value="1"/>
</dbReference>
<dbReference type="Pfam" id="PF00623">
    <property type="entry name" value="RNA_pol_Rpb1_2"/>
    <property type="match status" value="2"/>
</dbReference>
<dbReference type="Pfam" id="PF04983">
    <property type="entry name" value="RNA_pol_Rpb1_3"/>
    <property type="match status" value="1"/>
</dbReference>
<dbReference type="Pfam" id="PF05000">
    <property type="entry name" value="RNA_pol_Rpb1_4"/>
    <property type="match status" value="1"/>
</dbReference>
<dbReference type="Pfam" id="PF04998">
    <property type="entry name" value="RNA_pol_Rpb1_5"/>
    <property type="match status" value="1"/>
</dbReference>
<dbReference type="SMART" id="SM00663">
    <property type="entry name" value="RPOLA_N"/>
    <property type="match status" value="1"/>
</dbReference>
<dbReference type="SUPFAM" id="SSF64484">
    <property type="entry name" value="beta and beta-prime subunits of DNA dependent RNA-polymerase"/>
    <property type="match status" value="1"/>
</dbReference>
<comment type="function">
    <text evidence="1">DNA-dependent RNA polymerase catalyzes the transcription of DNA into RNA using the four ribonucleoside triphosphates as substrates.</text>
</comment>
<comment type="catalytic activity">
    <reaction evidence="1">
        <text>RNA(n) + a ribonucleoside 5'-triphosphate = RNA(n+1) + diphosphate</text>
        <dbReference type="Rhea" id="RHEA:21248"/>
        <dbReference type="Rhea" id="RHEA-COMP:14527"/>
        <dbReference type="Rhea" id="RHEA-COMP:17342"/>
        <dbReference type="ChEBI" id="CHEBI:33019"/>
        <dbReference type="ChEBI" id="CHEBI:61557"/>
        <dbReference type="ChEBI" id="CHEBI:140395"/>
        <dbReference type="EC" id="2.7.7.6"/>
    </reaction>
</comment>
<comment type="cofactor">
    <cofactor evidence="1">
        <name>Mg(2+)</name>
        <dbReference type="ChEBI" id="CHEBI:18420"/>
    </cofactor>
    <text evidence="1">Binds 1 Mg(2+) ion per subunit.</text>
</comment>
<comment type="cofactor">
    <cofactor evidence="1">
        <name>Zn(2+)</name>
        <dbReference type="ChEBI" id="CHEBI:29105"/>
    </cofactor>
    <text evidence="1">Binds 2 Zn(2+) ions per subunit.</text>
</comment>
<comment type="subunit">
    <text evidence="1">The RNAP catalytic core consists of 2 alpha, 1 beta, 1 beta' and 1 omega subunit. When a sigma factor is associated with the core the holoenzyme is formed, which can initiate transcription.</text>
</comment>
<comment type="similarity">
    <text evidence="1">Belongs to the RNA polymerase beta' chain family.</text>
</comment>
<sequence length="1412" mass="155396">MKGLLDLFKQFTPDEHFDAIKIGLASPEKIRSWSFGEVKKPETINYRTFKPERDGLFCAKIFGPIKDYECLCGKYKRLKHRGVICEKCGVEVTQTKVRRDRMGHIDLAAPCAHIWFLKSLPSRLGLVLDMTLRDIERVLYFEAYVVVDPGMTELKKFSIMTEDDYDAKKQQHGDEFVALMGAEGIQKLLAEIDLDVEIERLRGDMTGSELKVKKNSRRLKVMEAFKKSGIKPQWMVMNVLPVLPPDLRPLVPLDGGRFATSDLNDLYRRVINRNNRLARLLELKAPEIIVRNEKRMLQEAVDSLLDNGRRGKAMTGANKRALKSLADMIKGKSGRFRQNLLGKRVDYSGRSVIVVGPTLKLHQCGLPKLMALELFKPFIFSRLEAMGIATTIKAAKKEVESGTPVVWDILEEVIKEHPVMLNRAPTLHRLGIQAFEPVLIEGKAIQLHPLVCAAFNADFDGDQMAVHVPLSIEAQMEARTLMLASNNVLFPANGEPSIVPSQDVVLGLYYATRDRINAKGEGLIFSDVVEVQRALDNGQVEITAKIAVRLTEWTKDKESGEFVPESKLVDTTVGRALLSEILPKGLPFANINKALKKKEISRLINTSFRKCGLKETVVLADKLLQSGFRLATRAGISISIDDMLVPKQKHDLIERAEKEVKEIEQQYVSGLVTAGERYNKVVDIWGKTGDEVGKVMMAQLSKQKVEDRHGKLVDQESFNSIYMMADSGARGSAAQIRQLAGMRGLMAKPDGSIIETPITANFREGLNVLQYFISTHGARKGLADTALKTANSGYLTRRLVDVTQDLVVTEDDCGTDAGIAMRALVEGGEVIESLRDRILGRVTAIEVLHPETQQVVVPAGLMLDEDTLDIVEAAAVDEVKVRTPLTCHTRFGLCAKCYGRDLGRGGLVNAGEAVGVIAAQSIGEPGTQLTMRTFHIGGAASRAAVASSVEAKSDGHIGFNATMRYVTNGKGELVVISRSGEIIISDQHGRERERHKVPYGATLNIKADQQVKAGTVLANWDPLTRPIITEFAGKAKFENVEEGVTVAKQVDEVTGLSTLVVIDPKRRGAAKVVRPQVKLLDAAGNEVKIPGTDHSVTIGFPIGSLVQIRDGQDLAPGEVLARIPVEGQKTRDITGGLPRVAELFEARTPKDKGTLAEMTGTVSFGKETKGKVRLQITDPDGKVYEELVPKEKNILVHEGQVVNKGESIVDGPADPQDILRLLGIEELARYIVDEVQDVYRLQGVKINDKHIEVIVRQMLRRVQIVNPGDTHYILGEQVERASMLDTNDKMRAEGKMIATHADVLLGITKASLSTDSFISAASFQETTRVLTEAAIMGKRDELRGLKENVIVGRLIPAGTGLAFHRARKAKEEMDDAERRSIALQEAEEQALLTPATTAEAVVGEEPAPPPAQ</sequence>
<protein>
    <recommendedName>
        <fullName evidence="1">DNA-directed RNA polymerase subunit beta'</fullName>
        <shortName evidence="1">RNAP subunit beta'</shortName>
        <ecNumber evidence="1">2.7.7.6</ecNumber>
    </recommendedName>
    <alternativeName>
        <fullName evidence="1">RNA polymerase subunit beta'</fullName>
    </alternativeName>
    <alternativeName>
        <fullName evidence="1">Transcriptase subunit beta'</fullName>
    </alternativeName>
</protein>
<evidence type="ECO:0000255" key="1">
    <source>
        <dbReference type="HAMAP-Rule" id="MF_01322"/>
    </source>
</evidence>
<evidence type="ECO:0000256" key="2">
    <source>
        <dbReference type="SAM" id="MobiDB-lite"/>
    </source>
</evidence>
<feature type="chain" id="PRO_0000308852" description="DNA-directed RNA polymerase subunit beta'">
    <location>
        <begin position="1"/>
        <end position="1412"/>
    </location>
</feature>
<feature type="region of interest" description="Disordered" evidence="2">
    <location>
        <begin position="1388"/>
        <end position="1412"/>
    </location>
</feature>
<feature type="compositionally biased region" description="Low complexity" evidence="2">
    <location>
        <begin position="1393"/>
        <end position="1405"/>
    </location>
</feature>
<feature type="binding site" evidence="1">
    <location>
        <position position="70"/>
    </location>
    <ligand>
        <name>Zn(2+)</name>
        <dbReference type="ChEBI" id="CHEBI:29105"/>
        <label>1</label>
    </ligand>
</feature>
<feature type="binding site" evidence="1">
    <location>
        <position position="72"/>
    </location>
    <ligand>
        <name>Zn(2+)</name>
        <dbReference type="ChEBI" id="CHEBI:29105"/>
        <label>1</label>
    </ligand>
</feature>
<feature type="binding site" evidence="1">
    <location>
        <position position="85"/>
    </location>
    <ligand>
        <name>Zn(2+)</name>
        <dbReference type="ChEBI" id="CHEBI:29105"/>
        <label>1</label>
    </ligand>
</feature>
<feature type="binding site" evidence="1">
    <location>
        <position position="88"/>
    </location>
    <ligand>
        <name>Zn(2+)</name>
        <dbReference type="ChEBI" id="CHEBI:29105"/>
        <label>1</label>
    </ligand>
</feature>
<feature type="binding site" evidence="1">
    <location>
        <position position="458"/>
    </location>
    <ligand>
        <name>Mg(2+)</name>
        <dbReference type="ChEBI" id="CHEBI:18420"/>
    </ligand>
</feature>
<feature type="binding site" evidence="1">
    <location>
        <position position="460"/>
    </location>
    <ligand>
        <name>Mg(2+)</name>
        <dbReference type="ChEBI" id="CHEBI:18420"/>
    </ligand>
</feature>
<feature type="binding site" evidence="1">
    <location>
        <position position="462"/>
    </location>
    <ligand>
        <name>Mg(2+)</name>
        <dbReference type="ChEBI" id="CHEBI:18420"/>
    </ligand>
</feature>
<feature type="binding site" evidence="1">
    <location>
        <position position="813"/>
    </location>
    <ligand>
        <name>Zn(2+)</name>
        <dbReference type="ChEBI" id="CHEBI:29105"/>
        <label>2</label>
    </ligand>
</feature>
<feature type="binding site" evidence="1">
    <location>
        <position position="887"/>
    </location>
    <ligand>
        <name>Zn(2+)</name>
        <dbReference type="ChEBI" id="CHEBI:29105"/>
        <label>2</label>
    </ligand>
</feature>
<feature type="binding site" evidence="1">
    <location>
        <position position="894"/>
    </location>
    <ligand>
        <name>Zn(2+)</name>
        <dbReference type="ChEBI" id="CHEBI:29105"/>
        <label>2</label>
    </ligand>
</feature>
<feature type="binding site" evidence="1">
    <location>
        <position position="897"/>
    </location>
    <ligand>
        <name>Zn(2+)</name>
        <dbReference type="ChEBI" id="CHEBI:29105"/>
        <label>2</label>
    </ligand>
</feature>